<dbReference type="EC" id="2.1.1.-" evidence="1"/>
<dbReference type="EMBL" id="CP000088">
    <property type="protein sequence ID" value="AAZ57145.1"/>
    <property type="molecule type" value="Genomic_DNA"/>
</dbReference>
<dbReference type="RefSeq" id="WP_011293529.1">
    <property type="nucleotide sequence ID" value="NC_007333.1"/>
</dbReference>
<dbReference type="SMR" id="Q47K77"/>
<dbReference type="STRING" id="269800.Tfu_3112"/>
<dbReference type="KEGG" id="tfu:Tfu_3112"/>
<dbReference type="eggNOG" id="COG0357">
    <property type="taxonomic scope" value="Bacteria"/>
</dbReference>
<dbReference type="HOGENOM" id="CLU_065341_5_0_11"/>
<dbReference type="OrthoDB" id="9808773at2"/>
<dbReference type="GO" id="GO:0005829">
    <property type="term" value="C:cytosol"/>
    <property type="evidence" value="ECO:0007669"/>
    <property type="project" value="TreeGrafter"/>
</dbReference>
<dbReference type="GO" id="GO:0070043">
    <property type="term" value="F:rRNA (guanine-N7-)-methyltransferase activity"/>
    <property type="evidence" value="ECO:0007669"/>
    <property type="project" value="UniProtKB-UniRule"/>
</dbReference>
<dbReference type="CDD" id="cd02440">
    <property type="entry name" value="AdoMet_MTases"/>
    <property type="match status" value="1"/>
</dbReference>
<dbReference type="Gene3D" id="3.40.50.150">
    <property type="entry name" value="Vaccinia Virus protein VP39"/>
    <property type="match status" value="1"/>
</dbReference>
<dbReference type="HAMAP" id="MF_00074">
    <property type="entry name" value="16SrRNA_methyltr_G"/>
    <property type="match status" value="1"/>
</dbReference>
<dbReference type="InterPro" id="IPR003682">
    <property type="entry name" value="rRNA_ssu_MeTfrase_G"/>
</dbReference>
<dbReference type="InterPro" id="IPR029063">
    <property type="entry name" value="SAM-dependent_MTases_sf"/>
</dbReference>
<dbReference type="NCBIfam" id="TIGR00138">
    <property type="entry name" value="rsmG_gidB"/>
    <property type="match status" value="1"/>
</dbReference>
<dbReference type="PANTHER" id="PTHR31760">
    <property type="entry name" value="S-ADENOSYL-L-METHIONINE-DEPENDENT METHYLTRANSFERASES SUPERFAMILY PROTEIN"/>
    <property type="match status" value="1"/>
</dbReference>
<dbReference type="PANTHER" id="PTHR31760:SF0">
    <property type="entry name" value="S-ADENOSYL-L-METHIONINE-DEPENDENT METHYLTRANSFERASES SUPERFAMILY PROTEIN"/>
    <property type="match status" value="1"/>
</dbReference>
<dbReference type="Pfam" id="PF02527">
    <property type="entry name" value="GidB"/>
    <property type="match status" value="1"/>
</dbReference>
<dbReference type="SUPFAM" id="SSF53335">
    <property type="entry name" value="S-adenosyl-L-methionine-dependent methyltransferases"/>
    <property type="match status" value="1"/>
</dbReference>
<reference key="1">
    <citation type="journal article" date="2007" name="J. Bacteriol.">
        <title>Genome sequence and analysis of the soil cellulolytic actinomycete Thermobifida fusca YX.</title>
        <authorList>
            <person name="Lykidis A."/>
            <person name="Mavromatis K."/>
            <person name="Ivanova N."/>
            <person name="Anderson I."/>
            <person name="Land M."/>
            <person name="DiBartolo G."/>
            <person name="Martinez M."/>
            <person name="Lapidus A."/>
            <person name="Lucas S."/>
            <person name="Copeland A."/>
            <person name="Richardson P."/>
            <person name="Wilson D.B."/>
            <person name="Kyrpides N."/>
        </authorList>
    </citation>
    <scope>NUCLEOTIDE SEQUENCE [LARGE SCALE GENOMIC DNA]</scope>
    <source>
        <strain>YX</strain>
    </source>
</reference>
<name>RSMG_THEFY</name>
<feature type="chain" id="PRO_0000335442" description="Ribosomal RNA small subunit methyltransferase G">
    <location>
        <begin position="1"/>
        <end position="237"/>
    </location>
</feature>
<feature type="region of interest" description="Disordered" evidence="2">
    <location>
        <begin position="210"/>
        <end position="237"/>
    </location>
</feature>
<feature type="compositionally biased region" description="Basic residues" evidence="2">
    <location>
        <begin position="223"/>
        <end position="237"/>
    </location>
</feature>
<feature type="binding site" evidence="1">
    <location>
        <position position="72"/>
    </location>
    <ligand>
        <name>S-adenosyl-L-methionine</name>
        <dbReference type="ChEBI" id="CHEBI:59789"/>
    </ligand>
</feature>
<feature type="binding site" evidence="1">
    <location>
        <position position="77"/>
    </location>
    <ligand>
        <name>S-adenosyl-L-methionine</name>
        <dbReference type="ChEBI" id="CHEBI:59789"/>
    </ligand>
</feature>
<feature type="binding site" evidence="1">
    <location>
        <begin position="123"/>
        <end position="124"/>
    </location>
    <ligand>
        <name>S-adenosyl-L-methionine</name>
        <dbReference type="ChEBI" id="CHEBI:59789"/>
    </ligand>
</feature>
<feature type="binding site" evidence="1">
    <location>
        <position position="138"/>
    </location>
    <ligand>
        <name>S-adenosyl-L-methionine</name>
        <dbReference type="ChEBI" id="CHEBI:59789"/>
    </ligand>
</feature>
<comment type="function">
    <text evidence="1">Specifically methylates the N7 position of guanine in position 518 of 16S rRNA.</text>
</comment>
<comment type="subcellular location">
    <subcellularLocation>
        <location evidence="1">Cytoplasm</location>
    </subcellularLocation>
</comment>
<comment type="similarity">
    <text evidence="1">Belongs to the methyltransferase superfamily. RNA methyltransferase RsmG family.</text>
</comment>
<gene>
    <name evidence="1" type="primary">rsmG</name>
    <name type="ordered locus">Tfu_3112</name>
</gene>
<protein>
    <recommendedName>
        <fullName evidence="1">Ribosomal RNA small subunit methyltransferase G</fullName>
        <ecNumber evidence="1">2.1.1.-</ecNumber>
    </recommendedName>
    <alternativeName>
        <fullName evidence="1">16S rRNA 7-methylguanosine methyltransferase</fullName>
        <shortName evidence="1">16S rRNA m7G methyltransferase</shortName>
    </alternativeName>
</protein>
<organism>
    <name type="scientific">Thermobifida fusca (strain YX)</name>
    <dbReference type="NCBI Taxonomy" id="269800"/>
    <lineage>
        <taxon>Bacteria</taxon>
        <taxon>Bacillati</taxon>
        <taxon>Actinomycetota</taxon>
        <taxon>Actinomycetes</taxon>
        <taxon>Streptosporangiales</taxon>
        <taxon>Nocardiopsidaceae</taxon>
        <taxon>Thermobifida</taxon>
    </lineage>
</organism>
<keyword id="KW-0963">Cytoplasm</keyword>
<keyword id="KW-0489">Methyltransferase</keyword>
<keyword id="KW-0698">rRNA processing</keyword>
<keyword id="KW-0949">S-adenosyl-L-methionine</keyword>
<keyword id="KW-0808">Transferase</keyword>
<accession>Q47K77</accession>
<proteinExistence type="inferred from homology"/>
<sequence length="237" mass="25766">MTEHVVPSDAARELFGETLPVAQRYAELLADVGVARGLIGPREVPRLWERHLMNCAVVEELIPKGADVIDLGSGAGLPGVVLAILRPDLSVTLLEPLLRRTVFLNECVELLRLDNVRVYRGRAEEVHAKLRADIVTARAVAPLPKLIGWALPLLRKGGSLLALKGERAEAELEEARHELARQRPNIADVIRVGGGKVDPATTVVRVTVTTALETGTKAAPSRSPRKPGGRKKRGRKR</sequence>
<evidence type="ECO:0000255" key="1">
    <source>
        <dbReference type="HAMAP-Rule" id="MF_00074"/>
    </source>
</evidence>
<evidence type="ECO:0000256" key="2">
    <source>
        <dbReference type="SAM" id="MobiDB-lite"/>
    </source>
</evidence>